<proteinExistence type="inferred from homology"/>
<organism>
    <name type="scientific">Bordetella pertussis (strain Tohama I / ATCC BAA-589 / NCTC 13251)</name>
    <dbReference type="NCBI Taxonomy" id="257313"/>
    <lineage>
        <taxon>Bacteria</taxon>
        <taxon>Pseudomonadati</taxon>
        <taxon>Pseudomonadota</taxon>
        <taxon>Betaproteobacteria</taxon>
        <taxon>Burkholderiales</taxon>
        <taxon>Alcaligenaceae</taxon>
        <taxon>Bordetella</taxon>
    </lineage>
</organism>
<reference key="1">
    <citation type="journal article" date="2003" name="Nat. Genet.">
        <title>Comparative analysis of the genome sequences of Bordetella pertussis, Bordetella parapertussis and Bordetella bronchiseptica.</title>
        <authorList>
            <person name="Parkhill J."/>
            <person name="Sebaihia M."/>
            <person name="Preston A."/>
            <person name="Murphy L.D."/>
            <person name="Thomson N.R."/>
            <person name="Harris D.E."/>
            <person name="Holden M.T.G."/>
            <person name="Churcher C.M."/>
            <person name="Bentley S.D."/>
            <person name="Mungall K.L."/>
            <person name="Cerdeno-Tarraga A.-M."/>
            <person name="Temple L."/>
            <person name="James K.D."/>
            <person name="Harris B."/>
            <person name="Quail M.A."/>
            <person name="Achtman M."/>
            <person name="Atkin R."/>
            <person name="Baker S."/>
            <person name="Basham D."/>
            <person name="Bason N."/>
            <person name="Cherevach I."/>
            <person name="Chillingworth T."/>
            <person name="Collins M."/>
            <person name="Cronin A."/>
            <person name="Davis P."/>
            <person name="Doggett J."/>
            <person name="Feltwell T."/>
            <person name="Goble A."/>
            <person name="Hamlin N."/>
            <person name="Hauser H."/>
            <person name="Holroyd S."/>
            <person name="Jagels K."/>
            <person name="Leather S."/>
            <person name="Moule S."/>
            <person name="Norberczak H."/>
            <person name="O'Neil S."/>
            <person name="Ormond D."/>
            <person name="Price C."/>
            <person name="Rabbinowitsch E."/>
            <person name="Rutter S."/>
            <person name="Sanders M."/>
            <person name="Saunders D."/>
            <person name="Seeger K."/>
            <person name="Sharp S."/>
            <person name="Simmonds M."/>
            <person name="Skelton J."/>
            <person name="Squares R."/>
            <person name="Squares S."/>
            <person name="Stevens K."/>
            <person name="Unwin L."/>
            <person name="Whitehead S."/>
            <person name="Barrell B.G."/>
            <person name="Maskell D.J."/>
        </authorList>
    </citation>
    <scope>NUCLEOTIDE SEQUENCE [LARGE SCALE GENOMIC DNA]</scope>
    <source>
        <strain>Tohama I / ATCC BAA-589 / NCTC 13251</strain>
    </source>
</reference>
<gene>
    <name evidence="1" type="primary">aroK</name>
    <name type="ordered locus">BP3656</name>
</gene>
<keyword id="KW-0028">Amino-acid biosynthesis</keyword>
<keyword id="KW-0057">Aromatic amino acid biosynthesis</keyword>
<keyword id="KW-0067">ATP-binding</keyword>
<keyword id="KW-0963">Cytoplasm</keyword>
<keyword id="KW-0418">Kinase</keyword>
<keyword id="KW-0460">Magnesium</keyword>
<keyword id="KW-0479">Metal-binding</keyword>
<keyword id="KW-0547">Nucleotide-binding</keyword>
<keyword id="KW-1185">Reference proteome</keyword>
<keyword id="KW-0808">Transferase</keyword>
<feature type="chain" id="PRO_0000237852" description="Shikimate kinase">
    <location>
        <begin position="1"/>
        <end position="211"/>
    </location>
</feature>
<feature type="region of interest" description="Disordered" evidence="2">
    <location>
        <begin position="1"/>
        <end position="24"/>
    </location>
</feature>
<feature type="compositionally biased region" description="Low complexity" evidence="2">
    <location>
        <begin position="1"/>
        <end position="13"/>
    </location>
</feature>
<feature type="binding site" evidence="1">
    <location>
        <begin position="50"/>
        <end position="55"/>
    </location>
    <ligand>
        <name>ATP</name>
        <dbReference type="ChEBI" id="CHEBI:30616"/>
    </ligand>
</feature>
<feature type="binding site" evidence="1">
    <location>
        <position position="54"/>
    </location>
    <ligand>
        <name>Mg(2+)</name>
        <dbReference type="ChEBI" id="CHEBI:18420"/>
    </ligand>
</feature>
<feature type="binding site" evidence="1">
    <location>
        <position position="72"/>
    </location>
    <ligand>
        <name>substrate</name>
    </ligand>
</feature>
<feature type="binding site" evidence="1">
    <location>
        <position position="96"/>
    </location>
    <ligand>
        <name>substrate</name>
    </ligand>
</feature>
<feature type="binding site" evidence="1">
    <location>
        <position position="118"/>
    </location>
    <ligand>
        <name>substrate</name>
    </ligand>
</feature>
<feature type="binding site" evidence="1">
    <location>
        <position position="156"/>
    </location>
    <ligand>
        <name>ATP</name>
        <dbReference type="ChEBI" id="CHEBI:30616"/>
    </ligand>
</feature>
<feature type="binding site" evidence="1">
    <location>
        <position position="175"/>
    </location>
    <ligand>
        <name>substrate</name>
    </ligand>
</feature>
<protein>
    <recommendedName>
        <fullName evidence="1">Shikimate kinase</fullName>
        <shortName evidence="1">SK</shortName>
        <ecNumber evidence="1">2.7.1.71</ecNumber>
    </recommendedName>
</protein>
<name>AROK_BORPE</name>
<dbReference type="EC" id="2.7.1.71" evidence="1"/>
<dbReference type="EMBL" id="BX640422">
    <property type="protein sequence ID" value="CAE43913.1"/>
    <property type="molecule type" value="Genomic_DNA"/>
</dbReference>
<dbReference type="RefSeq" id="NP_882164.1">
    <property type="nucleotide sequence ID" value="NC_002929.2"/>
</dbReference>
<dbReference type="RefSeq" id="WP_003806947.1">
    <property type="nucleotide sequence ID" value="NZ_CP039022.1"/>
</dbReference>
<dbReference type="SMR" id="Q7VT94"/>
<dbReference type="STRING" id="257313.BP3656"/>
<dbReference type="PaxDb" id="257313-BP3656"/>
<dbReference type="KEGG" id="bpe:BP3656"/>
<dbReference type="PATRIC" id="fig|257313.5.peg.3954"/>
<dbReference type="eggNOG" id="COG0703">
    <property type="taxonomic scope" value="Bacteria"/>
</dbReference>
<dbReference type="HOGENOM" id="CLU_057607_2_2_4"/>
<dbReference type="UniPathway" id="UPA00053">
    <property type="reaction ID" value="UER00088"/>
</dbReference>
<dbReference type="Proteomes" id="UP000002676">
    <property type="component" value="Chromosome"/>
</dbReference>
<dbReference type="GO" id="GO:0005829">
    <property type="term" value="C:cytosol"/>
    <property type="evidence" value="ECO:0007669"/>
    <property type="project" value="TreeGrafter"/>
</dbReference>
<dbReference type="GO" id="GO:0005524">
    <property type="term" value="F:ATP binding"/>
    <property type="evidence" value="ECO:0007669"/>
    <property type="project" value="UniProtKB-UniRule"/>
</dbReference>
<dbReference type="GO" id="GO:0000287">
    <property type="term" value="F:magnesium ion binding"/>
    <property type="evidence" value="ECO:0007669"/>
    <property type="project" value="UniProtKB-UniRule"/>
</dbReference>
<dbReference type="GO" id="GO:0004765">
    <property type="term" value="F:shikimate kinase activity"/>
    <property type="evidence" value="ECO:0007669"/>
    <property type="project" value="UniProtKB-UniRule"/>
</dbReference>
<dbReference type="GO" id="GO:0008652">
    <property type="term" value="P:amino acid biosynthetic process"/>
    <property type="evidence" value="ECO:0007669"/>
    <property type="project" value="UniProtKB-KW"/>
</dbReference>
<dbReference type="GO" id="GO:0009073">
    <property type="term" value="P:aromatic amino acid family biosynthetic process"/>
    <property type="evidence" value="ECO:0007669"/>
    <property type="project" value="UniProtKB-KW"/>
</dbReference>
<dbReference type="GO" id="GO:0009423">
    <property type="term" value="P:chorismate biosynthetic process"/>
    <property type="evidence" value="ECO:0007669"/>
    <property type="project" value="UniProtKB-UniRule"/>
</dbReference>
<dbReference type="CDD" id="cd00464">
    <property type="entry name" value="SK"/>
    <property type="match status" value="1"/>
</dbReference>
<dbReference type="Gene3D" id="3.40.50.300">
    <property type="entry name" value="P-loop containing nucleotide triphosphate hydrolases"/>
    <property type="match status" value="1"/>
</dbReference>
<dbReference type="HAMAP" id="MF_00109">
    <property type="entry name" value="Shikimate_kinase"/>
    <property type="match status" value="1"/>
</dbReference>
<dbReference type="InterPro" id="IPR027417">
    <property type="entry name" value="P-loop_NTPase"/>
</dbReference>
<dbReference type="InterPro" id="IPR031322">
    <property type="entry name" value="Shikimate/glucono_kinase"/>
</dbReference>
<dbReference type="InterPro" id="IPR000623">
    <property type="entry name" value="Shikimate_kinase/TSH1"/>
</dbReference>
<dbReference type="InterPro" id="IPR023000">
    <property type="entry name" value="Shikimate_kinase_CS"/>
</dbReference>
<dbReference type="PANTHER" id="PTHR21087">
    <property type="entry name" value="SHIKIMATE KINASE"/>
    <property type="match status" value="1"/>
</dbReference>
<dbReference type="PANTHER" id="PTHR21087:SF16">
    <property type="entry name" value="SHIKIMATE KINASE 1, CHLOROPLASTIC"/>
    <property type="match status" value="1"/>
</dbReference>
<dbReference type="Pfam" id="PF01202">
    <property type="entry name" value="SKI"/>
    <property type="match status" value="1"/>
</dbReference>
<dbReference type="PRINTS" id="PR01100">
    <property type="entry name" value="SHIKIMTKNASE"/>
</dbReference>
<dbReference type="SUPFAM" id="SSF52540">
    <property type="entry name" value="P-loop containing nucleoside triphosphate hydrolases"/>
    <property type="match status" value="1"/>
</dbReference>
<dbReference type="PROSITE" id="PS01128">
    <property type="entry name" value="SHIKIMATE_KINASE"/>
    <property type="match status" value="1"/>
</dbReference>
<sequence length="211" mass="23039">MNASANLCAASANDPQPGDQEAAHPVACAGDEPAAFLPHDLPIFLVGMMGAGKTTIGRGLARALRREFIDLDHELEARCGVRVPVIFEIEGEAGFRRREAAALQECTQRRQIILATGGGAVLAAENRQALRERGIVIYLRASVEELFRRTSRDRNRPLLATADPRATLRELMVAREPLYNEVADLVIDTGSMPIATLVKSLLPKLQAYEKK</sequence>
<comment type="function">
    <text evidence="1">Catalyzes the specific phosphorylation of the 3-hydroxyl group of shikimic acid using ATP as a cosubstrate.</text>
</comment>
<comment type="catalytic activity">
    <reaction evidence="1">
        <text>shikimate + ATP = 3-phosphoshikimate + ADP + H(+)</text>
        <dbReference type="Rhea" id="RHEA:13121"/>
        <dbReference type="ChEBI" id="CHEBI:15378"/>
        <dbReference type="ChEBI" id="CHEBI:30616"/>
        <dbReference type="ChEBI" id="CHEBI:36208"/>
        <dbReference type="ChEBI" id="CHEBI:145989"/>
        <dbReference type="ChEBI" id="CHEBI:456216"/>
        <dbReference type="EC" id="2.7.1.71"/>
    </reaction>
</comment>
<comment type="cofactor">
    <cofactor evidence="1">
        <name>Mg(2+)</name>
        <dbReference type="ChEBI" id="CHEBI:18420"/>
    </cofactor>
    <text evidence="1">Binds 1 Mg(2+) ion per subunit.</text>
</comment>
<comment type="pathway">
    <text evidence="1">Metabolic intermediate biosynthesis; chorismate biosynthesis; chorismate from D-erythrose 4-phosphate and phosphoenolpyruvate: step 5/7.</text>
</comment>
<comment type="subunit">
    <text evidence="1">Monomer.</text>
</comment>
<comment type="subcellular location">
    <subcellularLocation>
        <location evidence="1">Cytoplasm</location>
    </subcellularLocation>
</comment>
<comment type="similarity">
    <text evidence="1">Belongs to the shikimate kinase family.</text>
</comment>
<evidence type="ECO:0000255" key="1">
    <source>
        <dbReference type="HAMAP-Rule" id="MF_00109"/>
    </source>
</evidence>
<evidence type="ECO:0000256" key="2">
    <source>
        <dbReference type="SAM" id="MobiDB-lite"/>
    </source>
</evidence>
<accession>Q7VT94</accession>